<name>RS12_MYXXD</name>
<protein>
    <recommendedName>
        <fullName evidence="2">Small ribosomal subunit protein uS12</fullName>
    </recommendedName>
    <alternativeName>
        <fullName evidence="3">30S ribosomal protein S12</fullName>
    </alternativeName>
</protein>
<reference key="1">
    <citation type="journal article" date="2006" name="Proc. Natl. Acad. Sci. U.S.A.">
        <title>Evolution of sensory complexity recorded in a myxobacterial genome.</title>
        <authorList>
            <person name="Goldman B.S."/>
            <person name="Nierman W.C."/>
            <person name="Kaiser D."/>
            <person name="Slater S.C."/>
            <person name="Durkin A.S."/>
            <person name="Eisen J.A."/>
            <person name="Ronning C.M."/>
            <person name="Barbazuk W.B."/>
            <person name="Blanchard M."/>
            <person name="Field C."/>
            <person name="Halling C."/>
            <person name="Hinkle G."/>
            <person name="Iartchuk O."/>
            <person name="Kim H.S."/>
            <person name="Mackenzie C."/>
            <person name="Madupu R."/>
            <person name="Miller N."/>
            <person name="Shvartsbeyn A."/>
            <person name="Sullivan S.A."/>
            <person name="Vaudin M."/>
            <person name="Wiegand R."/>
            <person name="Kaplan H.B."/>
        </authorList>
    </citation>
    <scope>NUCLEOTIDE SEQUENCE [LARGE SCALE GENOMIC DNA]</scope>
    <source>
        <strain>DK1622</strain>
    </source>
</reference>
<evidence type="ECO:0000250" key="1"/>
<evidence type="ECO:0000255" key="2">
    <source>
        <dbReference type="HAMAP-Rule" id="MF_00403"/>
    </source>
</evidence>
<evidence type="ECO:0000305" key="3"/>
<keyword id="KW-0488">Methylation</keyword>
<keyword id="KW-1185">Reference proteome</keyword>
<keyword id="KW-0687">Ribonucleoprotein</keyword>
<keyword id="KW-0689">Ribosomal protein</keyword>
<keyword id="KW-0694">RNA-binding</keyword>
<keyword id="KW-0699">rRNA-binding</keyword>
<keyword id="KW-0820">tRNA-binding</keyword>
<sequence>MPTISQLVRKGREKLVVKGKSPALKESPQKRGVCTRVYTTTPKKPNSALRKVARVRLTNGIEVTSYIPGVGHNLQEHSVVMIRGGRVKDLPGVRYHIVRGTLDSVGVAGRKQSRSKYGAKRPS</sequence>
<accession>Q1D779</accession>
<comment type="function">
    <text evidence="2">With S4 and S5 plays an important role in translational accuracy.</text>
</comment>
<comment type="function">
    <text evidence="2">Interacts with and stabilizes bases of the 16S rRNA that are involved in tRNA selection in the A site and with the mRNA backbone. Located at the interface of the 30S and 50S subunits, it traverses the body of the 30S subunit contacting proteins on the other side and probably holding the rRNA structure together. The combined cluster of proteins S8, S12 and S17 appears to hold together the shoulder and platform of the 30S subunit.</text>
</comment>
<comment type="subunit">
    <text evidence="2">Part of the 30S ribosomal subunit. Contacts proteins S8 and S17. May interact with IF1 in the 30S initiation complex.</text>
</comment>
<comment type="similarity">
    <text evidence="2">Belongs to the universal ribosomal protein uS12 family.</text>
</comment>
<feature type="chain" id="PRO_0000263572" description="Small ribosomal subunit protein uS12">
    <location>
        <begin position="1"/>
        <end position="123"/>
    </location>
</feature>
<feature type="modified residue" description="3-methylthioaspartic acid" evidence="1">
    <location>
        <position position="89"/>
    </location>
</feature>
<gene>
    <name evidence="2" type="primary">rpsL</name>
    <name type="ordered locus">MXAN_3295</name>
</gene>
<proteinExistence type="inferred from homology"/>
<organism>
    <name type="scientific">Myxococcus xanthus (strain DK1622)</name>
    <dbReference type="NCBI Taxonomy" id="246197"/>
    <lineage>
        <taxon>Bacteria</taxon>
        <taxon>Pseudomonadati</taxon>
        <taxon>Myxococcota</taxon>
        <taxon>Myxococcia</taxon>
        <taxon>Myxococcales</taxon>
        <taxon>Cystobacterineae</taxon>
        <taxon>Myxococcaceae</taxon>
        <taxon>Myxococcus</taxon>
    </lineage>
</organism>
<dbReference type="EMBL" id="CP000113">
    <property type="protein sequence ID" value="ABF87634.1"/>
    <property type="molecule type" value="Genomic_DNA"/>
</dbReference>
<dbReference type="RefSeq" id="WP_002637381.1">
    <property type="nucleotide sequence ID" value="NC_008095.1"/>
</dbReference>
<dbReference type="SMR" id="Q1D779"/>
<dbReference type="STRING" id="246197.MXAN_3295"/>
<dbReference type="EnsemblBacteria" id="ABF87634">
    <property type="protein sequence ID" value="ABF87634"/>
    <property type="gene ID" value="MXAN_3295"/>
</dbReference>
<dbReference type="GeneID" id="41360648"/>
<dbReference type="KEGG" id="mxa:MXAN_3295"/>
<dbReference type="eggNOG" id="COG0048">
    <property type="taxonomic scope" value="Bacteria"/>
</dbReference>
<dbReference type="HOGENOM" id="CLU_104295_1_2_7"/>
<dbReference type="OrthoDB" id="9802366at2"/>
<dbReference type="Proteomes" id="UP000002402">
    <property type="component" value="Chromosome"/>
</dbReference>
<dbReference type="GO" id="GO:0015935">
    <property type="term" value="C:small ribosomal subunit"/>
    <property type="evidence" value="ECO:0007669"/>
    <property type="project" value="InterPro"/>
</dbReference>
<dbReference type="GO" id="GO:0019843">
    <property type="term" value="F:rRNA binding"/>
    <property type="evidence" value="ECO:0007669"/>
    <property type="project" value="UniProtKB-UniRule"/>
</dbReference>
<dbReference type="GO" id="GO:0003735">
    <property type="term" value="F:structural constituent of ribosome"/>
    <property type="evidence" value="ECO:0007669"/>
    <property type="project" value="InterPro"/>
</dbReference>
<dbReference type="GO" id="GO:0000049">
    <property type="term" value="F:tRNA binding"/>
    <property type="evidence" value="ECO:0007669"/>
    <property type="project" value="UniProtKB-UniRule"/>
</dbReference>
<dbReference type="GO" id="GO:0006412">
    <property type="term" value="P:translation"/>
    <property type="evidence" value="ECO:0007669"/>
    <property type="project" value="UniProtKB-UniRule"/>
</dbReference>
<dbReference type="CDD" id="cd03368">
    <property type="entry name" value="Ribosomal_S12"/>
    <property type="match status" value="1"/>
</dbReference>
<dbReference type="FunFam" id="2.40.50.140:FF:000001">
    <property type="entry name" value="30S ribosomal protein S12"/>
    <property type="match status" value="1"/>
</dbReference>
<dbReference type="Gene3D" id="2.40.50.140">
    <property type="entry name" value="Nucleic acid-binding proteins"/>
    <property type="match status" value="1"/>
</dbReference>
<dbReference type="HAMAP" id="MF_00403_B">
    <property type="entry name" value="Ribosomal_uS12_B"/>
    <property type="match status" value="1"/>
</dbReference>
<dbReference type="InterPro" id="IPR012340">
    <property type="entry name" value="NA-bd_OB-fold"/>
</dbReference>
<dbReference type="InterPro" id="IPR006032">
    <property type="entry name" value="Ribosomal_uS12"/>
</dbReference>
<dbReference type="InterPro" id="IPR005679">
    <property type="entry name" value="Ribosomal_uS12_bac"/>
</dbReference>
<dbReference type="NCBIfam" id="TIGR00981">
    <property type="entry name" value="rpsL_bact"/>
    <property type="match status" value="1"/>
</dbReference>
<dbReference type="PANTHER" id="PTHR11652">
    <property type="entry name" value="30S RIBOSOMAL PROTEIN S12 FAMILY MEMBER"/>
    <property type="match status" value="1"/>
</dbReference>
<dbReference type="Pfam" id="PF00164">
    <property type="entry name" value="Ribosom_S12_S23"/>
    <property type="match status" value="1"/>
</dbReference>
<dbReference type="PIRSF" id="PIRSF002133">
    <property type="entry name" value="Ribosomal_S12/S23"/>
    <property type="match status" value="1"/>
</dbReference>
<dbReference type="PRINTS" id="PR01034">
    <property type="entry name" value="RIBOSOMALS12"/>
</dbReference>
<dbReference type="SUPFAM" id="SSF50249">
    <property type="entry name" value="Nucleic acid-binding proteins"/>
    <property type="match status" value="1"/>
</dbReference>
<dbReference type="PROSITE" id="PS00055">
    <property type="entry name" value="RIBOSOMAL_S12"/>
    <property type="match status" value="1"/>
</dbReference>